<feature type="chain" id="PRO_1000079691" description="GTPase Era">
    <location>
        <begin position="1"/>
        <end position="301"/>
    </location>
</feature>
<feature type="domain" description="Era-type G" evidence="2">
    <location>
        <begin position="7"/>
        <end position="175"/>
    </location>
</feature>
<feature type="domain" description="KH type-2" evidence="1">
    <location>
        <begin position="206"/>
        <end position="283"/>
    </location>
</feature>
<feature type="region of interest" description="G1" evidence="2">
    <location>
        <begin position="15"/>
        <end position="22"/>
    </location>
</feature>
<feature type="region of interest" description="G2" evidence="2">
    <location>
        <begin position="41"/>
        <end position="45"/>
    </location>
</feature>
<feature type="region of interest" description="G3" evidence="2">
    <location>
        <begin position="62"/>
        <end position="65"/>
    </location>
</feature>
<feature type="region of interest" description="G4" evidence="2">
    <location>
        <begin position="124"/>
        <end position="127"/>
    </location>
</feature>
<feature type="region of interest" description="G5" evidence="2">
    <location>
        <begin position="154"/>
        <end position="156"/>
    </location>
</feature>
<feature type="binding site" evidence="1">
    <location>
        <begin position="15"/>
        <end position="22"/>
    </location>
    <ligand>
        <name>GTP</name>
        <dbReference type="ChEBI" id="CHEBI:37565"/>
    </ligand>
</feature>
<feature type="binding site" evidence="1">
    <location>
        <begin position="62"/>
        <end position="66"/>
    </location>
    <ligand>
        <name>GTP</name>
        <dbReference type="ChEBI" id="CHEBI:37565"/>
    </ligand>
</feature>
<feature type="binding site" evidence="1">
    <location>
        <begin position="124"/>
        <end position="127"/>
    </location>
    <ligand>
        <name>GTP</name>
        <dbReference type="ChEBI" id="CHEBI:37565"/>
    </ligand>
</feature>
<evidence type="ECO:0000255" key="1">
    <source>
        <dbReference type="HAMAP-Rule" id="MF_00367"/>
    </source>
</evidence>
<evidence type="ECO:0000255" key="2">
    <source>
        <dbReference type="PROSITE-ProRule" id="PRU01050"/>
    </source>
</evidence>
<reference key="1">
    <citation type="journal article" date="2006" name="Proc. Natl. Acad. Sci. U.S.A.">
        <title>Identification of genes subject to positive selection in uropathogenic strains of Escherichia coli: a comparative genomics approach.</title>
        <authorList>
            <person name="Chen S.L."/>
            <person name="Hung C.-S."/>
            <person name="Xu J."/>
            <person name="Reigstad C.S."/>
            <person name="Magrini V."/>
            <person name="Sabo A."/>
            <person name="Blasiar D."/>
            <person name="Bieri T."/>
            <person name="Meyer R.R."/>
            <person name="Ozersky P."/>
            <person name="Armstrong J.R."/>
            <person name="Fulton R.S."/>
            <person name="Latreille J.P."/>
            <person name="Spieth J."/>
            <person name="Hooton T.M."/>
            <person name="Mardis E.R."/>
            <person name="Hultgren S.J."/>
            <person name="Gordon J.I."/>
        </authorList>
    </citation>
    <scope>NUCLEOTIDE SEQUENCE [LARGE SCALE GENOMIC DNA]</scope>
    <source>
        <strain>UTI89 / UPEC</strain>
    </source>
</reference>
<dbReference type="EMBL" id="CP000243">
    <property type="protein sequence ID" value="ABE08347.1"/>
    <property type="molecule type" value="Genomic_DNA"/>
</dbReference>
<dbReference type="RefSeq" id="WP_000020737.1">
    <property type="nucleotide sequence ID" value="NZ_CP064825.1"/>
</dbReference>
<dbReference type="SMR" id="Q1R8G7"/>
<dbReference type="GeneID" id="93774525"/>
<dbReference type="KEGG" id="eci:UTI89_C2887"/>
<dbReference type="HOGENOM" id="CLU_038009_1_2_6"/>
<dbReference type="Proteomes" id="UP000001952">
    <property type="component" value="Chromosome"/>
</dbReference>
<dbReference type="GO" id="GO:0005829">
    <property type="term" value="C:cytosol"/>
    <property type="evidence" value="ECO:0007669"/>
    <property type="project" value="TreeGrafter"/>
</dbReference>
<dbReference type="GO" id="GO:0005886">
    <property type="term" value="C:plasma membrane"/>
    <property type="evidence" value="ECO:0007669"/>
    <property type="project" value="UniProtKB-SubCell"/>
</dbReference>
<dbReference type="GO" id="GO:0005525">
    <property type="term" value="F:GTP binding"/>
    <property type="evidence" value="ECO:0007669"/>
    <property type="project" value="UniProtKB-UniRule"/>
</dbReference>
<dbReference type="GO" id="GO:0003924">
    <property type="term" value="F:GTPase activity"/>
    <property type="evidence" value="ECO:0007669"/>
    <property type="project" value="UniProtKB-UniRule"/>
</dbReference>
<dbReference type="GO" id="GO:0043024">
    <property type="term" value="F:ribosomal small subunit binding"/>
    <property type="evidence" value="ECO:0007669"/>
    <property type="project" value="TreeGrafter"/>
</dbReference>
<dbReference type="GO" id="GO:0070181">
    <property type="term" value="F:small ribosomal subunit rRNA binding"/>
    <property type="evidence" value="ECO:0007669"/>
    <property type="project" value="UniProtKB-UniRule"/>
</dbReference>
<dbReference type="GO" id="GO:0000028">
    <property type="term" value="P:ribosomal small subunit assembly"/>
    <property type="evidence" value="ECO:0007669"/>
    <property type="project" value="TreeGrafter"/>
</dbReference>
<dbReference type="CDD" id="cd04163">
    <property type="entry name" value="Era"/>
    <property type="match status" value="1"/>
</dbReference>
<dbReference type="CDD" id="cd22534">
    <property type="entry name" value="KH-II_Era"/>
    <property type="match status" value="1"/>
</dbReference>
<dbReference type="FunFam" id="3.30.300.20:FF:000003">
    <property type="entry name" value="GTPase Era"/>
    <property type="match status" value="1"/>
</dbReference>
<dbReference type="FunFam" id="3.40.50.300:FF:000094">
    <property type="entry name" value="GTPase Era"/>
    <property type="match status" value="1"/>
</dbReference>
<dbReference type="Gene3D" id="3.30.300.20">
    <property type="match status" value="1"/>
</dbReference>
<dbReference type="Gene3D" id="3.40.50.300">
    <property type="entry name" value="P-loop containing nucleotide triphosphate hydrolases"/>
    <property type="match status" value="1"/>
</dbReference>
<dbReference type="HAMAP" id="MF_00367">
    <property type="entry name" value="GTPase_Era"/>
    <property type="match status" value="1"/>
</dbReference>
<dbReference type="InterPro" id="IPR030388">
    <property type="entry name" value="G_ERA_dom"/>
</dbReference>
<dbReference type="InterPro" id="IPR006073">
    <property type="entry name" value="GTP-bd"/>
</dbReference>
<dbReference type="InterPro" id="IPR005662">
    <property type="entry name" value="GTPase_Era-like"/>
</dbReference>
<dbReference type="InterPro" id="IPR015946">
    <property type="entry name" value="KH_dom-like_a/b"/>
</dbReference>
<dbReference type="InterPro" id="IPR004044">
    <property type="entry name" value="KH_dom_type_2"/>
</dbReference>
<dbReference type="InterPro" id="IPR009019">
    <property type="entry name" value="KH_sf_prok-type"/>
</dbReference>
<dbReference type="InterPro" id="IPR027417">
    <property type="entry name" value="P-loop_NTPase"/>
</dbReference>
<dbReference type="InterPro" id="IPR005225">
    <property type="entry name" value="Small_GTP-bd"/>
</dbReference>
<dbReference type="NCBIfam" id="TIGR00436">
    <property type="entry name" value="era"/>
    <property type="match status" value="1"/>
</dbReference>
<dbReference type="NCBIfam" id="NF000908">
    <property type="entry name" value="PRK00089.1"/>
    <property type="match status" value="1"/>
</dbReference>
<dbReference type="NCBIfam" id="TIGR00231">
    <property type="entry name" value="small_GTP"/>
    <property type="match status" value="1"/>
</dbReference>
<dbReference type="PANTHER" id="PTHR42698">
    <property type="entry name" value="GTPASE ERA"/>
    <property type="match status" value="1"/>
</dbReference>
<dbReference type="PANTHER" id="PTHR42698:SF1">
    <property type="entry name" value="GTPASE ERA, MITOCHONDRIAL"/>
    <property type="match status" value="1"/>
</dbReference>
<dbReference type="Pfam" id="PF07650">
    <property type="entry name" value="KH_2"/>
    <property type="match status" value="1"/>
</dbReference>
<dbReference type="Pfam" id="PF01926">
    <property type="entry name" value="MMR_HSR1"/>
    <property type="match status" value="1"/>
</dbReference>
<dbReference type="SUPFAM" id="SSF52540">
    <property type="entry name" value="P-loop containing nucleoside triphosphate hydrolases"/>
    <property type="match status" value="1"/>
</dbReference>
<dbReference type="SUPFAM" id="SSF54814">
    <property type="entry name" value="Prokaryotic type KH domain (KH-domain type II)"/>
    <property type="match status" value="1"/>
</dbReference>
<dbReference type="PROSITE" id="PS51713">
    <property type="entry name" value="G_ERA"/>
    <property type="match status" value="1"/>
</dbReference>
<dbReference type="PROSITE" id="PS50823">
    <property type="entry name" value="KH_TYPE_2"/>
    <property type="match status" value="1"/>
</dbReference>
<organism>
    <name type="scientific">Escherichia coli (strain UTI89 / UPEC)</name>
    <dbReference type="NCBI Taxonomy" id="364106"/>
    <lineage>
        <taxon>Bacteria</taxon>
        <taxon>Pseudomonadati</taxon>
        <taxon>Pseudomonadota</taxon>
        <taxon>Gammaproteobacteria</taxon>
        <taxon>Enterobacterales</taxon>
        <taxon>Enterobacteriaceae</taxon>
        <taxon>Escherichia</taxon>
    </lineage>
</organism>
<protein>
    <recommendedName>
        <fullName evidence="1">GTPase Era</fullName>
    </recommendedName>
</protein>
<keyword id="KW-0997">Cell inner membrane</keyword>
<keyword id="KW-1003">Cell membrane</keyword>
<keyword id="KW-0963">Cytoplasm</keyword>
<keyword id="KW-0342">GTP-binding</keyword>
<keyword id="KW-0472">Membrane</keyword>
<keyword id="KW-0547">Nucleotide-binding</keyword>
<keyword id="KW-0690">Ribosome biogenesis</keyword>
<keyword id="KW-0694">RNA-binding</keyword>
<keyword id="KW-0699">rRNA-binding</keyword>
<comment type="function">
    <text evidence="1">An essential GTPase that binds both GDP and GTP, with rapid nucleotide exchange. Plays a role in 16S rRNA processing and 30S ribosomal subunit biogenesis and possibly also in cell cycle regulation and energy metabolism.</text>
</comment>
<comment type="subunit">
    <text evidence="1">Monomer.</text>
</comment>
<comment type="subcellular location">
    <subcellularLocation>
        <location>Cytoplasm</location>
    </subcellularLocation>
    <subcellularLocation>
        <location evidence="1">Cell inner membrane</location>
        <topology evidence="1">Peripheral membrane protein</topology>
    </subcellularLocation>
</comment>
<comment type="similarity">
    <text evidence="1 2">Belongs to the TRAFAC class TrmE-Era-EngA-EngB-Septin-like GTPase superfamily. Era GTPase family.</text>
</comment>
<gene>
    <name evidence="1" type="primary">era</name>
    <name type="ordered locus">UTI89_C2887</name>
</gene>
<name>ERA_ECOUT</name>
<accession>Q1R8G7</accession>
<sequence length="301" mass="33796">MSIDKSYCGFIAIVGRPNVGKSTLLNKLLGQKISITSRKAQTTRHRIVGIHTEGAYQAIYVDTPGLHMEEKRAINRLMNKAASSSIGDVELVIFVVEGTRWTPDDEMVLNKLRDGKAPVILAVNKVDNVQEKADLLPHLQFLASQMNFLDIVPISAETGLNVDTIAAIVRKHLPEATHHFPEDYITDRSQRFMASEIIREKLMRFLGAELPYSVTVEIERFVSNERGGYDINGLILVEREGQKKMVIGNKGAKIKTIGIEARKDMQEMFEAPVHLELWVKVKSGWADDERALRSLGYVDDL</sequence>
<proteinExistence type="inferred from homology"/>